<feature type="chain" id="PRO_0000180360" description="S-acyl fatty acid synthase thioesterase, medium chain">
    <location>
        <begin position="1"/>
        <end position="263"/>
    </location>
</feature>
<feature type="region of interest" description="Important for interaction with FASN" evidence="4">
    <location>
        <begin position="262"/>
        <end position="263"/>
    </location>
</feature>
<feature type="active site" evidence="1 4">
    <location>
        <position position="101"/>
    </location>
</feature>
<feature type="active site" evidence="4">
    <location>
        <position position="237"/>
    </location>
</feature>
<feature type="modified residue" description="N-acetylmethionine" evidence="3">
    <location>
        <position position="1"/>
    </location>
</feature>
<feature type="mutagenesis site" description="Loss of thioesterase activity." evidence="4">
    <original>S</original>
    <variation>A</variation>
    <location>
        <position position="101"/>
    </location>
</feature>
<feature type="mutagenesis site" description="Decreased thioesterase activity." evidence="4">
    <original>S</original>
    <variation>C</variation>
    <location>
        <position position="101"/>
    </location>
</feature>
<feature type="mutagenesis site" description="Moderately decreased thioesterase activity." evidence="4">
    <original>D</original>
    <variation>A</variation>
    <location>
        <position position="236"/>
    </location>
</feature>
<feature type="mutagenesis site" description="Loss of thioesterase activity." evidence="4">
    <original>H</original>
    <variation>A</variation>
    <location>
        <position position="237"/>
    </location>
</feature>
<feature type="mutagenesis site" description="Strongly decreased thioesterase activity with FASN-bound fatty acids. No effect on thioesterase activity with free decanoyl coenzyme A." evidence="4">
    <location>
        <begin position="262"/>
        <end position="263"/>
    </location>
</feature>
<feature type="mutagenesis site" description="Strongly decreased thioesterase activity with FASN-bound fatty acids. No effect on thioesterase activity with free decanoyl coenzyme A." evidence="4">
    <original>L</original>
    <variation>A</variation>
    <location>
        <position position="262"/>
    </location>
</feature>
<feature type="mutagenesis site" description="No effect on thioesterase activity." evidence="4">
    <original>T</original>
    <variation>V</variation>
    <location>
        <position position="263"/>
    </location>
</feature>
<proteinExistence type="evidence at protein level"/>
<dbReference type="EC" id="3.1.2.14" evidence="4"/>
<dbReference type="EMBL" id="M16200">
    <property type="protein sequence ID" value="AAA41578.1"/>
    <property type="molecule type" value="mRNA"/>
</dbReference>
<dbReference type="EMBL" id="Y00311">
    <property type="protein sequence ID" value="CAA68411.1"/>
    <property type="molecule type" value="mRNA"/>
</dbReference>
<dbReference type="PIR" id="A26625">
    <property type="entry name" value="A26625"/>
</dbReference>
<dbReference type="RefSeq" id="NP_073196.1">
    <property type="nucleotide sequence ID" value="NM_022705.2"/>
</dbReference>
<dbReference type="RefSeq" id="XP_008770108.1">
    <property type="nucleotide sequence ID" value="XM_008771886.2"/>
</dbReference>
<dbReference type="RefSeq" id="XP_008770109.1">
    <property type="nucleotide sequence ID" value="XM_008771887.2"/>
</dbReference>
<dbReference type="RefSeq" id="XP_017456149.1">
    <property type="nucleotide sequence ID" value="XM_017600660.3"/>
</dbReference>
<dbReference type="RefSeq" id="XP_063132798.1">
    <property type="nucleotide sequence ID" value="XM_063276728.1"/>
</dbReference>
<dbReference type="SMR" id="P08635"/>
<dbReference type="FunCoup" id="P08635">
    <property type="interactions" value="4"/>
</dbReference>
<dbReference type="STRING" id="10116.ENSRNOP00000022043"/>
<dbReference type="SwissLipids" id="SLP:000000766"/>
<dbReference type="ESTHER" id="ratno-sast">
    <property type="family name" value="Thioesterase"/>
</dbReference>
<dbReference type="iPTMnet" id="P08635"/>
<dbReference type="PhosphoSitePlus" id="P08635"/>
<dbReference type="PaxDb" id="10116-ENSRNOP00000022043"/>
<dbReference type="Ensembl" id="ENSRNOT00000022043.5">
    <property type="protein sequence ID" value="ENSRNOP00000022043.2"/>
    <property type="gene ID" value="ENSRNOG00000016403.5"/>
</dbReference>
<dbReference type="GeneID" id="64669"/>
<dbReference type="KEGG" id="rno:64669"/>
<dbReference type="UCSC" id="RGD:621115">
    <property type="organism name" value="rat"/>
</dbReference>
<dbReference type="AGR" id="RGD:621115"/>
<dbReference type="CTD" id="55301"/>
<dbReference type="RGD" id="621115">
    <property type="gene designation" value="Olah"/>
</dbReference>
<dbReference type="eggNOG" id="ENOG502RGSQ">
    <property type="taxonomic scope" value="Eukaryota"/>
</dbReference>
<dbReference type="GeneTree" id="ENSGT00390000015518"/>
<dbReference type="HOGENOM" id="CLU_070456_3_0_1"/>
<dbReference type="InParanoid" id="P08635"/>
<dbReference type="OMA" id="PGHGTNQ"/>
<dbReference type="OrthoDB" id="541883at2759"/>
<dbReference type="PhylomeDB" id="P08635"/>
<dbReference type="TreeFam" id="TF331555"/>
<dbReference type="PRO" id="PR:P08635"/>
<dbReference type="Proteomes" id="UP000002494">
    <property type="component" value="Chromosome 17"/>
</dbReference>
<dbReference type="Bgee" id="ENSRNOG00000016403">
    <property type="expression patterns" value="Expressed in ovary and 9 other cell types or tissues"/>
</dbReference>
<dbReference type="GO" id="GO:0005829">
    <property type="term" value="C:cytosol"/>
    <property type="evidence" value="ECO:0000314"/>
    <property type="project" value="UniProtKB"/>
</dbReference>
<dbReference type="GO" id="GO:0016297">
    <property type="term" value="F:fatty acyl-[ACP] hydrolase activity"/>
    <property type="evidence" value="ECO:0000314"/>
    <property type="project" value="UniProtKB"/>
</dbReference>
<dbReference type="GO" id="GO:0008610">
    <property type="term" value="P:lipid biosynthetic process"/>
    <property type="evidence" value="ECO:0000318"/>
    <property type="project" value="GO_Central"/>
</dbReference>
<dbReference type="GO" id="GO:0051792">
    <property type="term" value="P:medium-chain fatty acid biosynthetic process"/>
    <property type="evidence" value="ECO:0000314"/>
    <property type="project" value="UniProtKB"/>
</dbReference>
<dbReference type="FunFam" id="3.40.50.1820:FF:000153">
    <property type="entry name" value="Surfactin synthase thioesterase subunit"/>
    <property type="match status" value="1"/>
</dbReference>
<dbReference type="Gene3D" id="3.40.50.1820">
    <property type="entry name" value="alpha/beta hydrolase"/>
    <property type="match status" value="1"/>
</dbReference>
<dbReference type="InterPro" id="IPR029058">
    <property type="entry name" value="AB_hydrolase_fold"/>
</dbReference>
<dbReference type="InterPro" id="IPR012223">
    <property type="entry name" value="TEII"/>
</dbReference>
<dbReference type="InterPro" id="IPR001031">
    <property type="entry name" value="Thioesterase"/>
</dbReference>
<dbReference type="PANTHER" id="PTHR11487:SF0">
    <property type="entry name" value="S-ACYL FATTY ACID SYNTHASE THIOESTERASE, MEDIUM CHAIN"/>
    <property type="match status" value="1"/>
</dbReference>
<dbReference type="PANTHER" id="PTHR11487">
    <property type="entry name" value="THIOESTERASE"/>
    <property type="match status" value="1"/>
</dbReference>
<dbReference type="Pfam" id="PF00975">
    <property type="entry name" value="Thioesterase"/>
    <property type="match status" value="1"/>
</dbReference>
<dbReference type="SUPFAM" id="SSF53474">
    <property type="entry name" value="alpha/beta-Hydrolases"/>
    <property type="match status" value="1"/>
</dbReference>
<organism>
    <name type="scientific">Rattus norvegicus</name>
    <name type="common">Rat</name>
    <dbReference type="NCBI Taxonomy" id="10116"/>
    <lineage>
        <taxon>Eukaryota</taxon>
        <taxon>Metazoa</taxon>
        <taxon>Chordata</taxon>
        <taxon>Craniata</taxon>
        <taxon>Vertebrata</taxon>
        <taxon>Euteleostomi</taxon>
        <taxon>Mammalia</taxon>
        <taxon>Eutheria</taxon>
        <taxon>Euarchontoglires</taxon>
        <taxon>Glires</taxon>
        <taxon>Rodentia</taxon>
        <taxon>Myomorpha</taxon>
        <taxon>Muroidea</taxon>
        <taxon>Muridae</taxon>
        <taxon>Murinae</taxon>
        <taxon>Rattus</taxon>
    </lineage>
</organism>
<comment type="function">
    <text evidence="4">Contributes to the release of free fatty acids from fatty acid synthase (FASN). Has broad substrate specificity, giving rise to a range of free fatty acids with chain lengths between 10 and 16 carbon atoms (C10 - C16).</text>
</comment>
<comment type="catalytic activity">
    <reaction evidence="4">
        <text>(9Z)-octadecenoyl-[ACP] + H2O = (9Z)-octadecenoate + holo-[ACP] + H(+)</text>
        <dbReference type="Rhea" id="RHEA:15057"/>
        <dbReference type="Rhea" id="RHEA-COMP:9685"/>
        <dbReference type="Rhea" id="RHEA-COMP:9924"/>
        <dbReference type="ChEBI" id="CHEBI:15377"/>
        <dbReference type="ChEBI" id="CHEBI:15378"/>
        <dbReference type="ChEBI" id="CHEBI:30823"/>
        <dbReference type="ChEBI" id="CHEBI:64479"/>
        <dbReference type="ChEBI" id="CHEBI:78783"/>
        <dbReference type="EC" id="3.1.2.14"/>
    </reaction>
</comment>
<comment type="catalytic activity">
    <reaction evidence="4">
        <text>decanoyl-CoA + H2O = decanoate + CoA + H(+)</text>
        <dbReference type="Rhea" id="RHEA:40059"/>
        <dbReference type="ChEBI" id="CHEBI:15377"/>
        <dbReference type="ChEBI" id="CHEBI:15378"/>
        <dbReference type="ChEBI" id="CHEBI:27689"/>
        <dbReference type="ChEBI" id="CHEBI:57287"/>
        <dbReference type="ChEBI" id="CHEBI:61430"/>
    </reaction>
    <physiologicalReaction direction="left-to-right" evidence="8">
        <dbReference type="Rhea" id="RHEA:40060"/>
    </physiologicalReaction>
</comment>
<comment type="catalytic activity">
    <reaction evidence="4">
        <text>dodecanoyl-CoA + H2O = dodecanoate + CoA + H(+)</text>
        <dbReference type="Rhea" id="RHEA:30135"/>
        <dbReference type="ChEBI" id="CHEBI:15377"/>
        <dbReference type="ChEBI" id="CHEBI:15378"/>
        <dbReference type="ChEBI" id="CHEBI:18262"/>
        <dbReference type="ChEBI" id="CHEBI:57287"/>
        <dbReference type="ChEBI" id="CHEBI:57375"/>
    </reaction>
    <physiologicalReaction direction="left-to-right" evidence="8">
        <dbReference type="Rhea" id="RHEA:30136"/>
    </physiologicalReaction>
</comment>
<comment type="catalytic activity">
    <reaction evidence="4">
        <text>tetradecanoyl-CoA + H2O = tetradecanoate + CoA + H(+)</text>
        <dbReference type="Rhea" id="RHEA:40119"/>
        <dbReference type="ChEBI" id="CHEBI:15377"/>
        <dbReference type="ChEBI" id="CHEBI:15378"/>
        <dbReference type="ChEBI" id="CHEBI:30807"/>
        <dbReference type="ChEBI" id="CHEBI:57287"/>
        <dbReference type="ChEBI" id="CHEBI:57385"/>
    </reaction>
    <physiologicalReaction direction="left-to-right" evidence="8">
        <dbReference type="Rhea" id="RHEA:40120"/>
    </physiologicalReaction>
</comment>
<comment type="catalytic activity">
    <reaction evidence="4">
        <text>hexadecanoyl-CoA + H2O = hexadecanoate + CoA + H(+)</text>
        <dbReference type="Rhea" id="RHEA:16645"/>
        <dbReference type="ChEBI" id="CHEBI:7896"/>
        <dbReference type="ChEBI" id="CHEBI:15377"/>
        <dbReference type="ChEBI" id="CHEBI:15378"/>
        <dbReference type="ChEBI" id="CHEBI:57287"/>
        <dbReference type="ChEBI" id="CHEBI:57379"/>
    </reaction>
    <physiologicalReaction direction="left-to-right" evidence="8">
        <dbReference type="Rhea" id="RHEA:16646"/>
    </physiologicalReaction>
</comment>
<comment type="subunit">
    <text evidence="4">Interacts (via C-terminus) with FASN.</text>
</comment>
<comment type="subcellular location">
    <subcellularLocation>
        <location evidence="2">Cytoplasm</location>
        <location evidence="2">Cytosol</location>
    </subcellularLocation>
</comment>
<comment type="similarity">
    <text evidence="7">Belongs to the thioesterase family.</text>
</comment>
<keyword id="KW-0007">Acetylation</keyword>
<keyword id="KW-0963">Cytoplasm</keyword>
<keyword id="KW-0903">Direct protein sequencing</keyword>
<keyword id="KW-0275">Fatty acid biosynthesis</keyword>
<keyword id="KW-0276">Fatty acid metabolism</keyword>
<keyword id="KW-0378">Hydrolase</keyword>
<keyword id="KW-0444">Lipid biosynthesis</keyword>
<keyword id="KW-0443">Lipid metabolism</keyword>
<keyword id="KW-1185">Reference proteome</keyword>
<reference key="1">
    <citation type="journal article" date="1987" name="Biochemistry">
        <title>Molecular cloning and sequence analysis of complementary DNA encoding rat mammary gland medium-chain S-acyl fatty acid synthetase thio ester hydrolase.</title>
        <authorList>
            <person name="Safford R."/>
            <person name="de Silva J."/>
            <person name="Lucas C."/>
            <person name="Windust J.H.C."/>
            <person name="Shedden J."/>
            <person name="James C.M."/>
            <person name="Sidebottom C.M."/>
            <person name="Slabas A.R."/>
            <person name="Tombs M.P."/>
            <person name="Hughes S.G."/>
        </authorList>
    </citation>
    <scope>NUCLEOTIDE SEQUENCE [MRNA]</scope>
    <scope>PARTIAL PROTEIN SEQUENCE</scope>
    <scope>TISSUE SPECIFICITY</scope>
    <scope>SUBCELLULAR LOCATION</scope>
    <source>
        <tissue>Mammary gland</tissue>
    </source>
</reference>
<reference key="2">
    <citation type="journal article" date="1987" name="Biochem. J.">
        <title>Cloning and sequencing of the medium-chain S-acyl fatty acid synthetase thioester hydrolase cDNA from rat mammary gland.</title>
        <authorList>
            <person name="Naggert J."/>
            <person name="Williams B."/>
            <person name="Caslhman D.P."/>
            <person name="Smith S."/>
        </authorList>
    </citation>
    <scope>NUCLEOTIDE SEQUENCE [MRNA]</scope>
    <source>
        <tissue>Mammary gland</tissue>
    </source>
</reference>
<reference key="3">
    <citation type="journal article" date="1987" name="Biochemistry">
        <title>Complete amino acid sequence of the medium-chain S-acyl fatty acid synthetase thio ester hydrolase from rat mammary gland.</title>
        <authorList>
            <person name="Randhawa Z.I."/>
            <person name="Smith S."/>
        </authorList>
    </citation>
    <scope>PROTEIN SEQUENCE</scope>
    <scope>ACETYLATION AT MET-1</scope>
    <source>
        <tissue>Mammary gland</tissue>
    </source>
</reference>
<reference key="4">
    <citation type="journal article" date="1987" name="Eur. J. Biochem.">
        <title>Amino acid sequence of the serine active-site region of the medium-chain S-acyl fatty acid synthetase thioester hydrolase from rat mammary gland.</title>
        <authorList>
            <person name="Randhawa Z.I."/>
            <person name="Naggert J."/>
            <person name="Blacher R.W."/>
            <person name="Smith S."/>
        </authorList>
    </citation>
    <scope>NUCLEOTIDE SEQUENCE [MRNA] OF 91-121</scope>
    <scope>PROTEIN SEQUENCE OF 65-121</scope>
    <scope>ACTIVE SITE</scope>
    <source>
        <tissue>Mammary gland</tissue>
    </source>
</reference>
<reference key="5">
    <citation type="journal article" date="1993" name="Proc. Natl. Acad. Sci. U.S.A.">
        <title>Roles of Ser101, Asp236, and His237 in catalysis of thioesterase II and of the C-terminal region of the enzyme in its interaction with fatty acid synthase.</title>
        <authorList>
            <person name="Tai M.H."/>
            <person name="Chirala S.S."/>
            <person name="Wakil S.J."/>
        </authorList>
    </citation>
    <scope>CATALYTIC ACTIVITY</scope>
    <scope>FUNCTION</scope>
    <scope>ACTIVE SITE</scope>
    <scope>INTERACTION WITH FASN</scope>
    <scope>MUTAGENESIS OF SER-101; ASP-236; HIS-237; LEU-262; 262-LEU-THR-263 AND THR-263</scope>
</reference>
<gene>
    <name evidence="9" type="primary">Olah</name>
    <name evidence="5" type="synonym">Mch</name>
    <name type="synonym">Thedc1</name>
</gene>
<sequence>METAVNAKSPRNEKVLNCLYQNPDAVFKLICFPWAGGGSIHFAKWGQKINDSLEVHAVRLAGRETRLGEPFANDIYQIADEIVTALLPIIQDKAFAFFGHSFGSYIALITALLLKEKYKMEPLHIFVSGASAPHSTSRPQVPDLNELTEEQVRHHLLDFGGTPKHLIEDQDVLRMFIPLLKADAGVVKKFIFDKPSKALLSLDITGFLGSEDTIKDIEGWQDLTSGKFDVHMLPGDHFYLMKPDNENFIKNYIAKCLELSSLT</sequence>
<protein>
    <recommendedName>
        <fullName evidence="6">S-acyl fatty acid synthase thioesterase, medium chain</fullName>
        <ecNumber evidence="4">3.1.2.14</ecNumber>
    </recommendedName>
    <alternativeName>
        <fullName evidence="5">Medium-chain S-acyl fatty acid synthetase thioester hydrolase</fullName>
    </alternativeName>
    <alternativeName>
        <fullName>Oleoyl-ACP hydrolase</fullName>
    </alternativeName>
    <alternativeName>
        <fullName>Thioesterase II</fullName>
    </alternativeName>
    <alternativeName>
        <fullName>Thioesterase domain-containing protein 1</fullName>
    </alternativeName>
</protein>
<evidence type="ECO:0000269" key="1">
    <source>
    </source>
</evidence>
<evidence type="ECO:0000269" key="2">
    <source>
    </source>
</evidence>
<evidence type="ECO:0000269" key="3">
    <source>
    </source>
</evidence>
<evidence type="ECO:0000269" key="4">
    <source>
    </source>
</evidence>
<evidence type="ECO:0000303" key="5">
    <source>
    </source>
</evidence>
<evidence type="ECO:0000303" key="6">
    <source>
    </source>
</evidence>
<evidence type="ECO:0000305" key="7"/>
<evidence type="ECO:0000305" key="8">
    <source>
    </source>
</evidence>
<evidence type="ECO:0000312" key="9">
    <source>
        <dbReference type="RGD" id="621115"/>
    </source>
</evidence>
<name>SAST_RAT</name>
<accession>P08635</accession>